<keyword id="KW-1185">Reference proteome</keyword>
<keyword id="KW-0687">Ribonucleoprotein</keyword>
<keyword id="KW-0689">Ribosomal protein</keyword>
<keyword id="KW-0694">RNA-binding</keyword>
<keyword id="KW-0699">rRNA-binding</keyword>
<gene>
    <name evidence="1" type="primary">rpsK</name>
    <name type="ordered locus">HP_1295</name>
</gene>
<proteinExistence type="inferred from homology"/>
<dbReference type="EMBL" id="AE000511">
    <property type="protein sequence ID" value="AAD08338.1"/>
    <property type="molecule type" value="Genomic_DNA"/>
</dbReference>
<dbReference type="PIR" id="G64681">
    <property type="entry name" value="G64681"/>
</dbReference>
<dbReference type="RefSeq" id="NP_208087.1">
    <property type="nucleotide sequence ID" value="NC_000915.1"/>
</dbReference>
<dbReference type="RefSeq" id="WP_001129287.1">
    <property type="nucleotide sequence ID" value="NC_018939.1"/>
</dbReference>
<dbReference type="SMR" id="P56018"/>
<dbReference type="FunCoup" id="P56018">
    <property type="interactions" value="398"/>
</dbReference>
<dbReference type="IntAct" id="P56018">
    <property type="interactions" value="1"/>
</dbReference>
<dbReference type="STRING" id="85962.HP_1295"/>
<dbReference type="PaxDb" id="85962-C694_06690"/>
<dbReference type="EnsemblBacteria" id="AAD08338">
    <property type="protein sequence ID" value="AAD08338"/>
    <property type="gene ID" value="HP_1295"/>
</dbReference>
<dbReference type="KEGG" id="heo:C694_06690"/>
<dbReference type="KEGG" id="hpy:HP_1295"/>
<dbReference type="PATRIC" id="fig|85962.47.peg.1389"/>
<dbReference type="eggNOG" id="COG0100">
    <property type="taxonomic scope" value="Bacteria"/>
</dbReference>
<dbReference type="InParanoid" id="P56018"/>
<dbReference type="OrthoDB" id="9806415at2"/>
<dbReference type="PhylomeDB" id="P56018"/>
<dbReference type="Proteomes" id="UP000000429">
    <property type="component" value="Chromosome"/>
</dbReference>
<dbReference type="GO" id="GO:0022627">
    <property type="term" value="C:cytosolic small ribosomal subunit"/>
    <property type="evidence" value="ECO:0000318"/>
    <property type="project" value="GO_Central"/>
</dbReference>
<dbReference type="GO" id="GO:0019843">
    <property type="term" value="F:rRNA binding"/>
    <property type="evidence" value="ECO:0007669"/>
    <property type="project" value="UniProtKB-UniRule"/>
</dbReference>
<dbReference type="GO" id="GO:0003735">
    <property type="term" value="F:structural constituent of ribosome"/>
    <property type="evidence" value="ECO:0000318"/>
    <property type="project" value="GO_Central"/>
</dbReference>
<dbReference type="GO" id="GO:0006412">
    <property type="term" value="P:translation"/>
    <property type="evidence" value="ECO:0000318"/>
    <property type="project" value="GO_Central"/>
</dbReference>
<dbReference type="FunFam" id="3.30.420.80:FF:000001">
    <property type="entry name" value="30S ribosomal protein S11"/>
    <property type="match status" value="1"/>
</dbReference>
<dbReference type="Gene3D" id="3.30.420.80">
    <property type="entry name" value="Ribosomal protein S11"/>
    <property type="match status" value="1"/>
</dbReference>
<dbReference type="HAMAP" id="MF_01310">
    <property type="entry name" value="Ribosomal_uS11"/>
    <property type="match status" value="1"/>
</dbReference>
<dbReference type="InterPro" id="IPR001971">
    <property type="entry name" value="Ribosomal_uS11"/>
</dbReference>
<dbReference type="InterPro" id="IPR019981">
    <property type="entry name" value="Ribosomal_uS11_bac-type"/>
</dbReference>
<dbReference type="InterPro" id="IPR018102">
    <property type="entry name" value="Ribosomal_uS11_CS"/>
</dbReference>
<dbReference type="InterPro" id="IPR036967">
    <property type="entry name" value="Ribosomal_uS11_sf"/>
</dbReference>
<dbReference type="NCBIfam" id="NF003698">
    <property type="entry name" value="PRK05309.1"/>
    <property type="match status" value="1"/>
</dbReference>
<dbReference type="NCBIfam" id="TIGR03632">
    <property type="entry name" value="uS11_bact"/>
    <property type="match status" value="1"/>
</dbReference>
<dbReference type="PANTHER" id="PTHR11759">
    <property type="entry name" value="40S RIBOSOMAL PROTEIN S14/30S RIBOSOMAL PROTEIN S11"/>
    <property type="match status" value="1"/>
</dbReference>
<dbReference type="Pfam" id="PF00411">
    <property type="entry name" value="Ribosomal_S11"/>
    <property type="match status" value="1"/>
</dbReference>
<dbReference type="PIRSF" id="PIRSF002131">
    <property type="entry name" value="Ribosomal_S11"/>
    <property type="match status" value="1"/>
</dbReference>
<dbReference type="SUPFAM" id="SSF53137">
    <property type="entry name" value="Translational machinery components"/>
    <property type="match status" value="1"/>
</dbReference>
<dbReference type="PROSITE" id="PS00054">
    <property type="entry name" value="RIBOSOMAL_S11"/>
    <property type="match status" value="1"/>
</dbReference>
<accession>P56018</accession>
<sequence>MAKRNVTAKKKVVKKNIARGVVYISATFNNTNITITDEMGNVICWSTAGGLGFKGSKKSTPYAAQQAVESALSKAKEHGVKEVGIKVQGPGSGRETAIKSVGATEGIKVLWIKDITPLPHNGCRPPKRRRV</sequence>
<organism>
    <name type="scientific">Helicobacter pylori (strain ATCC 700392 / 26695)</name>
    <name type="common">Campylobacter pylori</name>
    <dbReference type="NCBI Taxonomy" id="85962"/>
    <lineage>
        <taxon>Bacteria</taxon>
        <taxon>Pseudomonadati</taxon>
        <taxon>Campylobacterota</taxon>
        <taxon>Epsilonproteobacteria</taxon>
        <taxon>Campylobacterales</taxon>
        <taxon>Helicobacteraceae</taxon>
        <taxon>Helicobacter</taxon>
    </lineage>
</organism>
<reference key="1">
    <citation type="journal article" date="1997" name="Nature">
        <title>The complete genome sequence of the gastric pathogen Helicobacter pylori.</title>
        <authorList>
            <person name="Tomb J.-F."/>
            <person name="White O."/>
            <person name="Kerlavage A.R."/>
            <person name="Clayton R.A."/>
            <person name="Sutton G.G."/>
            <person name="Fleischmann R.D."/>
            <person name="Ketchum K.A."/>
            <person name="Klenk H.-P."/>
            <person name="Gill S.R."/>
            <person name="Dougherty B.A."/>
            <person name="Nelson K.E."/>
            <person name="Quackenbush J."/>
            <person name="Zhou L."/>
            <person name="Kirkness E.F."/>
            <person name="Peterson S.N."/>
            <person name="Loftus B.J."/>
            <person name="Richardson D.L."/>
            <person name="Dodson R.J."/>
            <person name="Khalak H.G."/>
            <person name="Glodek A."/>
            <person name="McKenney K."/>
            <person name="FitzGerald L.M."/>
            <person name="Lee N."/>
            <person name="Adams M.D."/>
            <person name="Hickey E.K."/>
            <person name="Berg D.E."/>
            <person name="Gocayne J.D."/>
            <person name="Utterback T.R."/>
            <person name="Peterson J.D."/>
            <person name="Kelley J.M."/>
            <person name="Cotton M.D."/>
            <person name="Weidman J.F."/>
            <person name="Fujii C."/>
            <person name="Bowman C."/>
            <person name="Watthey L."/>
            <person name="Wallin E."/>
            <person name="Hayes W.S."/>
            <person name="Borodovsky M."/>
            <person name="Karp P.D."/>
            <person name="Smith H.O."/>
            <person name="Fraser C.M."/>
            <person name="Venter J.C."/>
        </authorList>
    </citation>
    <scope>NUCLEOTIDE SEQUENCE [LARGE SCALE GENOMIC DNA]</scope>
    <source>
        <strain>ATCC 700392 / 26695</strain>
    </source>
</reference>
<evidence type="ECO:0000255" key="1">
    <source>
        <dbReference type="HAMAP-Rule" id="MF_01310"/>
    </source>
</evidence>
<evidence type="ECO:0000305" key="2"/>
<name>RS11_HELPY</name>
<comment type="function">
    <text evidence="1">Located on the platform of the 30S subunit, it bridges several disparate RNA helices of the 16S rRNA. Forms part of the Shine-Dalgarno cleft in the 70S ribosome.</text>
</comment>
<comment type="subunit">
    <text evidence="1">Part of the 30S ribosomal subunit. Interacts with proteins S7 and S18. Binds to IF-3.</text>
</comment>
<comment type="similarity">
    <text evidence="1">Belongs to the universal ribosomal protein uS11 family.</text>
</comment>
<protein>
    <recommendedName>
        <fullName evidence="1">Small ribosomal subunit protein uS11</fullName>
    </recommendedName>
    <alternativeName>
        <fullName evidence="2">30S ribosomal protein S11</fullName>
    </alternativeName>
</protein>
<feature type="chain" id="PRO_0000123157" description="Small ribosomal subunit protein uS11">
    <location>
        <begin position="1"/>
        <end position="131"/>
    </location>
</feature>